<proteinExistence type="evidence at protein level"/>
<evidence type="ECO:0000255" key="1">
    <source>
        <dbReference type="HAMAP-Rule" id="MF_01961"/>
    </source>
</evidence>
<evidence type="ECO:0000256" key="2">
    <source>
        <dbReference type="SAM" id="MobiDB-lite"/>
    </source>
</evidence>
<evidence type="ECO:0000269" key="3">
    <source>
    </source>
</evidence>
<comment type="function">
    <text evidence="1 3">Bifunctional enzyme with both catalase and broad-spectrum peroxidase activity. May play a role in polycyclic aromatic hydrocarbon (PAH) metabolism.</text>
</comment>
<comment type="catalytic activity">
    <reaction evidence="1">
        <text>H2O2 + AH2 = A + 2 H2O</text>
        <dbReference type="Rhea" id="RHEA:30275"/>
        <dbReference type="ChEBI" id="CHEBI:13193"/>
        <dbReference type="ChEBI" id="CHEBI:15377"/>
        <dbReference type="ChEBI" id="CHEBI:16240"/>
        <dbReference type="ChEBI" id="CHEBI:17499"/>
        <dbReference type="EC" id="1.11.1.21"/>
    </reaction>
</comment>
<comment type="catalytic activity">
    <reaction evidence="1">
        <text>2 H2O2 = O2 + 2 H2O</text>
        <dbReference type="Rhea" id="RHEA:20309"/>
        <dbReference type="ChEBI" id="CHEBI:15377"/>
        <dbReference type="ChEBI" id="CHEBI:15379"/>
        <dbReference type="ChEBI" id="CHEBI:16240"/>
        <dbReference type="EC" id="1.11.1.21"/>
    </reaction>
</comment>
<comment type="cofactor">
    <cofactor evidence="1">
        <name>heme b</name>
        <dbReference type="ChEBI" id="CHEBI:60344"/>
    </cofactor>
    <text evidence="1">Binds 1 heme b (iron(II)-protoporphyrin IX) group per dimer.</text>
</comment>
<comment type="subunit">
    <text evidence="1">Homodimer or homotetramer.</text>
</comment>
<comment type="induction">
    <text evidence="3">By the polycyclic aromatic hydrocarbon pyrene.</text>
</comment>
<comment type="PTM">
    <text evidence="1">Formation of the three residue Trp-Tyr-Met cross-link is important for the catalase, but not the peroxidase activity of the enzyme.</text>
</comment>
<comment type="similarity">
    <text evidence="1">Belongs to the peroxidase family. Peroxidase/catalase subfamily.</text>
</comment>
<dbReference type="EC" id="1.11.1.21" evidence="1"/>
<dbReference type="EMBL" id="AF207899">
    <property type="protein sequence ID" value="AAF20142.1"/>
    <property type="molecule type" value="Genomic_DNA"/>
</dbReference>
<dbReference type="SMR" id="Q9R2E9"/>
<dbReference type="PeroxiBase" id="2436">
    <property type="entry name" value="MvaCP01_PYR1"/>
</dbReference>
<dbReference type="GO" id="GO:0005829">
    <property type="term" value="C:cytosol"/>
    <property type="evidence" value="ECO:0007669"/>
    <property type="project" value="TreeGrafter"/>
</dbReference>
<dbReference type="GO" id="GO:0004096">
    <property type="term" value="F:catalase activity"/>
    <property type="evidence" value="ECO:0007669"/>
    <property type="project" value="UniProtKB-UniRule"/>
</dbReference>
<dbReference type="GO" id="GO:0020037">
    <property type="term" value="F:heme binding"/>
    <property type="evidence" value="ECO:0007669"/>
    <property type="project" value="InterPro"/>
</dbReference>
<dbReference type="GO" id="GO:0046872">
    <property type="term" value="F:metal ion binding"/>
    <property type="evidence" value="ECO:0007669"/>
    <property type="project" value="UniProtKB-KW"/>
</dbReference>
<dbReference type="GO" id="GO:0070301">
    <property type="term" value="P:cellular response to hydrogen peroxide"/>
    <property type="evidence" value="ECO:0007669"/>
    <property type="project" value="TreeGrafter"/>
</dbReference>
<dbReference type="GO" id="GO:0042744">
    <property type="term" value="P:hydrogen peroxide catabolic process"/>
    <property type="evidence" value="ECO:0007669"/>
    <property type="project" value="UniProtKB-KW"/>
</dbReference>
<dbReference type="CDD" id="cd08200">
    <property type="entry name" value="catalase_peroxidase_2"/>
    <property type="match status" value="1"/>
</dbReference>
<dbReference type="FunFam" id="1.10.420.10:FF:000004">
    <property type="entry name" value="Catalase-peroxidase"/>
    <property type="match status" value="1"/>
</dbReference>
<dbReference type="FunFam" id="1.10.520.10:FF:000002">
    <property type="entry name" value="Catalase-peroxidase"/>
    <property type="match status" value="1"/>
</dbReference>
<dbReference type="Gene3D" id="1.10.520.10">
    <property type="match status" value="2"/>
</dbReference>
<dbReference type="Gene3D" id="1.10.420.10">
    <property type="entry name" value="Peroxidase, domain 2"/>
    <property type="match status" value="2"/>
</dbReference>
<dbReference type="HAMAP" id="MF_01961">
    <property type="entry name" value="Catal_peroxid"/>
    <property type="match status" value="1"/>
</dbReference>
<dbReference type="InterPro" id="IPR000763">
    <property type="entry name" value="Catalase_peroxidase"/>
</dbReference>
<dbReference type="InterPro" id="IPR002016">
    <property type="entry name" value="Haem_peroxidase"/>
</dbReference>
<dbReference type="InterPro" id="IPR010255">
    <property type="entry name" value="Haem_peroxidase_sf"/>
</dbReference>
<dbReference type="InterPro" id="IPR019794">
    <property type="entry name" value="Peroxidases_AS"/>
</dbReference>
<dbReference type="InterPro" id="IPR019793">
    <property type="entry name" value="Peroxidases_heam-ligand_BS"/>
</dbReference>
<dbReference type="NCBIfam" id="TIGR00198">
    <property type="entry name" value="cat_per_HPI"/>
    <property type="match status" value="1"/>
</dbReference>
<dbReference type="NCBIfam" id="NF011635">
    <property type="entry name" value="PRK15061.1"/>
    <property type="match status" value="1"/>
</dbReference>
<dbReference type="PANTHER" id="PTHR30555:SF0">
    <property type="entry name" value="CATALASE-PEROXIDASE"/>
    <property type="match status" value="1"/>
</dbReference>
<dbReference type="PANTHER" id="PTHR30555">
    <property type="entry name" value="HYDROPEROXIDASE I, BIFUNCTIONAL CATALASE-PEROXIDASE"/>
    <property type="match status" value="1"/>
</dbReference>
<dbReference type="Pfam" id="PF00141">
    <property type="entry name" value="peroxidase"/>
    <property type="match status" value="2"/>
</dbReference>
<dbReference type="PRINTS" id="PR00460">
    <property type="entry name" value="BPEROXIDASE"/>
</dbReference>
<dbReference type="PRINTS" id="PR00458">
    <property type="entry name" value="PEROXIDASE"/>
</dbReference>
<dbReference type="SUPFAM" id="SSF48113">
    <property type="entry name" value="Heme-dependent peroxidases"/>
    <property type="match status" value="2"/>
</dbReference>
<dbReference type="PROSITE" id="PS00435">
    <property type="entry name" value="PEROXIDASE_1"/>
    <property type="match status" value="1"/>
</dbReference>
<dbReference type="PROSITE" id="PS00436">
    <property type="entry name" value="PEROXIDASE_2"/>
    <property type="match status" value="1"/>
</dbReference>
<protein>
    <recommendedName>
        <fullName evidence="1">Catalase-peroxidase</fullName>
        <shortName evidence="1">CP</shortName>
        <ecNumber evidence="1">1.11.1.21</ecNumber>
    </recommendedName>
    <alternativeName>
        <fullName>P81</fullName>
    </alternativeName>
    <alternativeName>
        <fullName evidence="1">Peroxidase/catalase</fullName>
    </alternativeName>
</protein>
<name>KATG_MYCVN</name>
<gene>
    <name evidence="1" type="primary">katG</name>
</gene>
<keyword id="KW-0903">Direct protein sequencing</keyword>
<keyword id="KW-0349">Heme</keyword>
<keyword id="KW-0376">Hydrogen peroxide</keyword>
<keyword id="KW-0408">Iron</keyword>
<keyword id="KW-0479">Metal-binding</keyword>
<keyword id="KW-0560">Oxidoreductase</keyword>
<keyword id="KW-0575">Peroxidase</keyword>
<organism>
    <name type="scientific">Mycolicibacterium vanbaalenii</name>
    <name type="common">Mycobacterium vanbaalenii</name>
    <dbReference type="NCBI Taxonomy" id="110539"/>
    <lineage>
        <taxon>Bacteria</taxon>
        <taxon>Bacillati</taxon>
        <taxon>Actinomycetota</taxon>
        <taxon>Actinomycetes</taxon>
        <taxon>Mycobacteriales</taxon>
        <taxon>Mycobacteriaceae</taxon>
        <taxon>Mycolicibacterium</taxon>
    </lineage>
</organism>
<sequence>MPEATEHPPIGEAQTEPAQSGCPMVIKPPVEGGSNRDWWPNAVNLKMLQKDPEVIDPIDEGYDYREAVQTLDVDQLARDFDELCTNSQDWWPADFGHYGPLFIRMSWHAAGTYRVQDGRGGAGKGMQRFAPLNSWPDNVSLDKARRLLWPLKKKYGKKLSWSDLIVYAGNRAMENMGFKTAGFAFGRPDYWEPEEDVYWGAEHEWLGSQDRYAGANGDRTKLENPLGASHMGLIYVNPEGPEGNPDPIAAAIDIRETFGRMAMNDVETAALIVGGHTFGKTHGATDIVNGPEPEAAPLEQMGLGWSNPGVGIDTVSSGLEVTWTHTPTKWDNSFLEILYGNEWELFKSPAGANQWRPKDNGWADSVPMAQGTGKTHPAMLTTDLSMRMDPIYGEITRRWLDHPEELAEEYAKAWFKLLHRDMGPVQRYLGPLVPTQTWLWQDIVPAGKPLSDADVATLKGAIADSGLTVQQLVSTAWKAASSFRISDMRGGANGGRIRLQPQLGWESNEPDELAQVISKLEEIQGSSGIDVSFADLVVLGGNVGIETAAKAAGFDIEVPFSSGRGDATQEQTDVEAFSYLEPKADGFRNYVGKGLNLPAEYQLIDQANLLNLSAPQMTVLIGGLRALGITHGDSKLGVLTDTPGQLTNDYFVNLTDMGVKWAPAPADDGTYVGTDRDTGEVKYTASRVDLLFGSNSQLRALAEVYAEDDSRDKFVKDFVAAWVNVMDADRYDIGKGA</sequence>
<accession>Q9R2E9</accession>
<reference key="1">
    <citation type="journal article" date="2000" name="Appl. Environ. Microbiol.">
        <title>Cloning, expression, and characterization of the katG gene, encoding catalase-peroxidase, from the polycyclic aromatic hydrocarbon-degrading bacterium Mycobacterium sp. strain PYR-1.</title>
        <authorList>
            <person name="Wang R.-F."/>
            <person name="Wennerstrom D."/>
            <person name="Cao W.-W."/>
            <person name="Khan A.A."/>
            <person name="Cerniglia C.E."/>
        </authorList>
    </citation>
    <scope>NUCLEOTIDE SEQUENCE [GENOMIC DNA]</scope>
    <scope>PROTEIN SEQUENCE OF 2-25</scope>
    <scope>FUNCTION</scope>
    <scope>INDUCTION</scope>
    <source>
        <strain>PYR-1</strain>
    </source>
</reference>
<feature type="initiator methionine" description="Removed" evidence="3">
    <location>
        <position position="1"/>
    </location>
</feature>
<feature type="chain" id="PRO_0000354846" description="Catalase-peroxidase">
    <location>
        <begin position="2"/>
        <end position="737"/>
    </location>
</feature>
<feature type="region of interest" description="Disordered" evidence="2">
    <location>
        <begin position="1"/>
        <end position="33"/>
    </location>
</feature>
<feature type="active site" description="Proton acceptor" evidence="1">
    <location>
        <position position="108"/>
    </location>
</feature>
<feature type="binding site" description="axial binding residue" evidence="1">
    <location>
        <position position="276"/>
    </location>
    <ligand>
        <name>heme</name>
        <dbReference type="ChEBI" id="CHEBI:30413"/>
    </ligand>
    <ligandPart>
        <name>Fe</name>
        <dbReference type="ChEBI" id="CHEBI:18248"/>
    </ligandPart>
</feature>
<feature type="site" description="Transition state stabilizer" evidence="1">
    <location>
        <position position="104"/>
    </location>
</feature>
<feature type="cross-link" description="Tryptophyl-tyrosyl-methioninium (Trp-Tyr) (with M-261)" evidence="1">
    <location>
        <begin position="107"/>
        <end position="235"/>
    </location>
</feature>
<feature type="cross-link" description="Tryptophyl-tyrosyl-methioninium (Tyr-Met) (with W-107)" evidence="1">
    <location>
        <begin position="235"/>
        <end position="261"/>
    </location>
</feature>